<feature type="chain" id="PRO_1000205775" description="Small ribosomal subunit protein bS16">
    <location>
        <begin position="1"/>
        <end position="82"/>
    </location>
</feature>
<accession>C4LD27</accession>
<dbReference type="EMBL" id="CP001616">
    <property type="protein sequence ID" value="ACQ94558.1"/>
    <property type="molecule type" value="Genomic_DNA"/>
</dbReference>
<dbReference type="RefSeq" id="WP_015880007.1">
    <property type="nucleotide sequence ID" value="NC_012691.1"/>
</dbReference>
<dbReference type="SMR" id="C4LD27"/>
<dbReference type="STRING" id="595494.Tola_2969"/>
<dbReference type="KEGG" id="tau:Tola_2969"/>
<dbReference type="eggNOG" id="COG0228">
    <property type="taxonomic scope" value="Bacteria"/>
</dbReference>
<dbReference type="HOGENOM" id="CLU_100590_5_1_6"/>
<dbReference type="OrthoDB" id="9807878at2"/>
<dbReference type="Proteomes" id="UP000009073">
    <property type="component" value="Chromosome"/>
</dbReference>
<dbReference type="GO" id="GO:0005737">
    <property type="term" value="C:cytoplasm"/>
    <property type="evidence" value="ECO:0007669"/>
    <property type="project" value="UniProtKB-ARBA"/>
</dbReference>
<dbReference type="GO" id="GO:0015935">
    <property type="term" value="C:small ribosomal subunit"/>
    <property type="evidence" value="ECO:0007669"/>
    <property type="project" value="TreeGrafter"/>
</dbReference>
<dbReference type="GO" id="GO:0003735">
    <property type="term" value="F:structural constituent of ribosome"/>
    <property type="evidence" value="ECO:0007669"/>
    <property type="project" value="InterPro"/>
</dbReference>
<dbReference type="GO" id="GO:0006412">
    <property type="term" value="P:translation"/>
    <property type="evidence" value="ECO:0007669"/>
    <property type="project" value="UniProtKB-UniRule"/>
</dbReference>
<dbReference type="FunFam" id="3.30.1320.10:FF:000001">
    <property type="entry name" value="30S ribosomal protein S16"/>
    <property type="match status" value="1"/>
</dbReference>
<dbReference type="Gene3D" id="3.30.1320.10">
    <property type="match status" value="1"/>
</dbReference>
<dbReference type="HAMAP" id="MF_00385">
    <property type="entry name" value="Ribosomal_bS16"/>
    <property type="match status" value="1"/>
</dbReference>
<dbReference type="InterPro" id="IPR000307">
    <property type="entry name" value="Ribosomal_bS16"/>
</dbReference>
<dbReference type="InterPro" id="IPR023803">
    <property type="entry name" value="Ribosomal_bS16_dom_sf"/>
</dbReference>
<dbReference type="NCBIfam" id="TIGR00002">
    <property type="entry name" value="S16"/>
    <property type="match status" value="1"/>
</dbReference>
<dbReference type="PANTHER" id="PTHR12919">
    <property type="entry name" value="30S RIBOSOMAL PROTEIN S16"/>
    <property type="match status" value="1"/>
</dbReference>
<dbReference type="PANTHER" id="PTHR12919:SF20">
    <property type="entry name" value="SMALL RIBOSOMAL SUBUNIT PROTEIN BS16M"/>
    <property type="match status" value="1"/>
</dbReference>
<dbReference type="Pfam" id="PF00886">
    <property type="entry name" value="Ribosomal_S16"/>
    <property type="match status" value="1"/>
</dbReference>
<dbReference type="SUPFAM" id="SSF54565">
    <property type="entry name" value="Ribosomal protein S16"/>
    <property type="match status" value="1"/>
</dbReference>
<comment type="similarity">
    <text evidence="1">Belongs to the bacterial ribosomal protein bS16 family.</text>
</comment>
<sequence>MVTIRLQRGGAKKRPFYQVVVADARFARDGRFIERVGFFNPLAAGQAEKVNLDLERIQHWVGQGASLSDRVAKLVKDASKAA</sequence>
<evidence type="ECO:0000255" key="1">
    <source>
        <dbReference type="HAMAP-Rule" id="MF_00385"/>
    </source>
</evidence>
<evidence type="ECO:0000305" key="2"/>
<gene>
    <name evidence="1" type="primary">rpsP</name>
    <name type="ordered locus">Tola_2969</name>
</gene>
<proteinExistence type="inferred from homology"/>
<name>RS16_TOLAT</name>
<organism>
    <name type="scientific">Tolumonas auensis (strain DSM 9187 / NBRC 110442 / TA 4)</name>
    <dbReference type="NCBI Taxonomy" id="595494"/>
    <lineage>
        <taxon>Bacteria</taxon>
        <taxon>Pseudomonadati</taxon>
        <taxon>Pseudomonadota</taxon>
        <taxon>Gammaproteobacteria</taxon>
        <taxon>Aeromonadales</taxon>
        <taxon>Aeromonadaceae</taxon>
        <taxon>Tolumonas</taxon>
    </lineage>
</organism>
<reference key="1">
    <citation type="submission" date="2009-05" db="EMBL/GenBank/DDBJ databases">
        <title>Complete sequence of Tolumonas auensis DSM 9187.</title>
        <authorList>
            <consortium name="US DOE Joint Genome Institute"/>
            <person name="Lucas S."/>
            <person name="Copeland A."/>
            <person name="Lapidus A."/>
            <person name="Glavina del Rio T."/>
            <person name="Tice H."/>
            <person name="Bruce D."/>
            <person name="Goodwin L."/>
            <person name="Pitluck S."/>
            <person name="Chertkov O."/>
            <person name="Brettin T."/>
            <person name="Detter J.C."/>
            <person name="Han C."/>
            <person name="Larimer F."/>
            <person name="Land M."/>
            <person name="Hauser L."/>
            <person name="Kyrpides N."/>
            <person name="Mikhailova N."/>
            <person name="Spring S."/>
            <person name="Beller H."/>
        </authorList>
    </citation>
    <scope>NUCLEOTIDE SEQUENCE [LARGE SCALE GENOMIC DNA]</scope>
    <source>
        <strain>DSM 9187 / NBRC 110442 / TA 4</strain>
    </source>
</reference>
<protein>
    <recommendedName>
        <fullName evidence="1">Small ribosomal subunit protein bS16</fullName>
    </recommendedName>
    <alternativeName>
        <fullName evidence="2">30S ribosomal protein S16</fullName>
    </alternativeName>
</protein>
<keyword id="KW-1185">Reference proteome</keyword>
<keyword id="KW-0687">Ribonucleoprotein</keyword>
<keyword id="KW-0689">Ribosomal protein</keyword>